<organism>
    <name type="scientific">Caulobacter vibrioides (strain ATCC 19089 / CIP 103742 / CB 15)</name>
    <name type="common">Caulobacter crescentus</name>
    <dbReference type="NCBI Taxonomy" id="190650"/>
    <lineage>
        <taxon>Bacteria</taxon>
        <taxon>Pseudomonadati</taxon>
        <taxon>Pseudomonadota</taxon>
        <taxon>Alphaproteobacteria</taxon>
        <taxon>Caulobacterales</taxon>
        <taxon>Caulobacteraceae</taxon>
        <taxon>Caulobacter</taxon>
    </lineage>
</organism>
<keyword id="KW-0963">Cytoplasm</keyword>
<keyword id="KW-0448">Lipopolysaccharide biosynthesis</keyword>
<keyword id="KW-1185">Reference proteome</keyword>
<keyword id="KW-0808">Transferase</keyword>
<gene>
    <name evidence="1" type="primary">kdsA</name>
    <name type="ordered locus">CC_1429</name>
</gene>
<sequence length="287" mass="30370">MDQPKAVAPNAVVEIKTPTGAPVRIGNGEKLSIIAGPCQMESRQHALETAHALKEMADRLGVGLIYKTSYDKANRTSANAQRGIGLKDSLAIFQEIREVTGLPTLTDVHETSHCSIVAEAVDVIQIPAFLCRQTDLLVAAASTGRAINIKKGQFLAPWDMKNVIAKVTGAGNPNVMACERGASFGYNTLVSDMRALPIMKEIGCPVVFDATHSVQQPGGQGTSSGGQREFVPTLARAAVAVGVACVFIETHPDPDNAPSDGPNMVPVKEFEALVANLLRYDALTKAA</sequence>
<name>KDSA_CAUVC</name>
<feature type="chain" id="PRO_0000187114" description="2-dehydro-3-deoxyphosphooctonate aldolase">
    <location>
        <begin position="1"/>
        <end position="287"/>
    </location>
</feature>
<dbReference type="EC" id="2.5.1.55" evidence="1"/>
<dbReference type="EMBL" id="AE005673">
    <property type="protein sequence ID" value="AAK23410.1"/>
    <property type="molecule type" value="Genomic_DNA"/>
</dbReference>
<dbReference type="PIR" id="F87426">
    <property type="entry name" value="F87426"/>
</dbReference>
<dbReference type="RefSeq" id="NP_420242.1">
    <property type="nucleotide sequence ID" value="NC_002696.2"/>
</dbReference>
<dbReference type="RefSeq" id="WP_010919305.1">
    <property type="nucleotide sequence ID" value="NC_002696.2"/>
</dbReference>
<dbReference type="SMR" id="Q9A8C5"/>
<dbReference type="STRING" id="190650.CC_1429"/>
<dbReference type="EnsemblBacteria" id="AAK23410">
    <property type="protein sequence ID" value="AAK23410"/>
    <property type="gene ID" value="CC_1429"/>
</dbReference>
<dbReference type="KEGG" id="ccr:CC_1429"/>
<dbReference type="PATRIC" id="fig|190650.5.peg.1455"/>
<dbReference type="eggNOG" id="COG2877">
    <property type="taxonomic scope" value="Bacteria"/>
</dbReference>
<dbReference type="HOGENOM" id="CLU_036666_0_0_5"/>
<dbReference type="BioCyc" id="CAULO:CC1429-MONOMER"/>
<dbReference type="UniPathway" id="UPA00030"/>
<dbReference type="UniPathway" id="UPA00357">
    <property type="reaction ID" value="UER00474"/>
</dbReference>
<dbReference type="Proteomes" id="UP000001816">
    <property type="component" value="Chromosome"/>
</dbReference>
<dbReference type="GO" id="GO:0005737">
    <property type="term" value="C:cytoplasm"/>
    <property type="evidence" value="ECO:0007669"/>
    <property type="project" value="UniProtKB-SubCell"/>
</dbReference>
<dbReference type="GO" id="GO:0008676">
    <property type="term" value="F:3-deoxy-8-phosphooctulonate synthase activity"/>
    <property type="evidence" value="ECO:0007669"/>
    <property type="project" value="UniProtKB-UniRule"/>
</dbReference>
<dbReference type="GO" id="GO:0019294">
    <property type="term" value="P:keto-3-deoxy-D-manno-octulosonic acid biosynthetic process"/>
    <property type="evidence" value="ECO:0007669"/>
    <property type="project" value="UniProtKB-UniRule"/>
</dbReference>
<dbReference type="Gene3D" id="3.20.20.70">
    <property type="entry name" value="Aldolase class I"/>
    <property type="match status" value="1"/>
</dbReference>
<dbReference type="HAMAP" id="MF_00056">
    <property type="entry name" value="KDO8P_synth"/>
    <property type="match status" value="1"/>
</dbReference>
<dbReference type="InterPro" id="IPR013785">
    <property type="entry name" value="Aldolase_TIM"/>
</dbReference>
<dbReference type="InterPro" id="IPR006218">
    <property type="entry name" value="DAHP1/KDSA"/>
</dbReference>
<dbReference type="InterPro" id="IPR006269">
    <property type="entry name" value="KDO8P_synthase"/>
</dbReference>
<dbReference type="NCBIfam" id="TIGR01362">
    <property type="entry name" value="KDO8P_synth"/>
    <property type="match status" value="1"/>
</dbReference>
<dbReference type="NCBIfam" id="NF003543">
    <property type="entry name" value="PRK05198.1"/>
    <property type="match status" value="1"/>
</dbReference>
<dbReference type="PANTHER" id="PTHR21057">
    <property type="entry name" value="PHOSPHO-2-DEHYDRO-3-DEOXYHEPTONATE ALDOLASE"/>
    <property type="match status" value="1"/>
</dbReference>
<dbReference type="Pfam" id="PF00793">
    <property type="entry name" value="DAHP_synth_1"/>
    <property type="match status" value="1"/>
</dbReference>
<dbReference type="SUPFAM" id="SSF51569">
    <property type="entry name" value="Aldolase"/>
    <property type="match status" value="1"/>
</dbReference>
<proteinExistence type="inferred from homology"/>
<protein>
    <recommendedName>
        <fullName evidence="1">2-dehydro-3-deoxyphosphooctonate aldolase</fullName>
        <ecNumber evidence="1">2.5.1.55</ecNumber>
    </recommendedName>
    <alternativeName>
        <fullName evidence="1">3-deoxy-D-manno-octulosonic acid 8-phosphate synthase</fullName>
    </alternativeName>
    <alternativeName>
        <fullName evidence="1">KDO-8-phosphate synthase</fullName>
        <shortName evidence="1">KDO 8-P synthase</shortName>
        <shortName evidence="1">KDOPS</shortName>
    </alternativeName>
    <alternativeName>
        <fullName evidence="1">Phospho-2-dehydro-3-deoxyoctonate aldolase</fullName>
    </alternativeName>
</protein>
<evidence type="ECO:0000255" key="1">
    <source>
        <dbReference type="HAMAP-Rule" id="MF_00056"/>
    </source>
</evidence>
<reference key="1">
    <citation type="journal article" date="2001" name="Proc. Natl. Acad. Sci. U.S.A.">
        <title>Complete genome sequence of Caulobacter crescentus.</title>
        <authorList>
            <person name="Nierman W.C."/>
            <person name="Feldblyum T.V."/>
            <person name="Laub M.T."/>
            <person name="Paulsen I.T."/>
            <person name="Nelson K.E."/>
            <person name="Eisen J.A."/>
            <person name="Heidelberg J.F."/>
            <person name="Alley M.R.K."/>
            <person name="Ohta N."/>
            <person name="Maddock J.R."/>
            <person name="Potocka I."/>
            <person name="Nelson W.C."/>
            <person name="Newton A."/>
            <person name="Stephens C."/>
            <person name="Phadke N.D."/>
            <person name="Ely B."/>
            <person name="DeBoy R.T."/>
            <person name="Dodson R.J."/>
            <person name="Durkin A.S."/>
            <person name="Gwinn M.L."/>
            <person name="Haft D.H."/>
            <person name="Kolonay J.F."/>
            <person name="Smit J."/>
            <person name="Craven M.B."/>
            <person name="Khouri H.M."/>
            <person name="Shetty J."/>
            <person name="Berry K.J."/>
            <person name="Utterback T.R."/>
            <person name="Tran K."/>
            <person name="Wolf A.M."/>
            <person name="Vamathevan J.J."/>
            <person name="Ermolaeva M.D."/>
            <person name="White O."/>
            <person name="Salzberg S.L."/>
            <person name="Venter J.C."/>
            <person name="Shapiro L."/>
            <person name="Fraser C.M."/>
        </authorList>
    </citation>
    <scope>NUCLEOTIDE SEQUENCE [LARGE SCALE GENOMIC DNA]</scope>
    <source>
        <strain>ATCC 19089 / CIP 103742 / CB 15</strain>
    </source>
</reference>
<accession>Q9A8C5</accession>
<comment type="catalytic activity">
    <reaction evidence="1">
        <text>D-arabinose 5-phosphate + phosphoenolpyruvate + H2O = 3-deoxy-alpha-D-manno-2-octulosonate-8-phosphate + phosphate</text>
        <dbReference type="Rhea" id="RHEA:14053"/>
        <dbReference type="ChEBI" id="CHEBI:15377"/>
        <dbReference type="ChEBI" id="CHEBI:43474"/>
        <dbReference type="ChEBI" id="CHEBI:57693"/>
        <dbReference type="ChEBI" id="CHEBI:58702"/>
        <dbReference type="ChEBI" id="CHEBI:85985"/>
        <dbReference type="EC" id="2.5.1.55"/>
    </reaction>
</comment>
<comment type="pathway">
    <text evidence="1">Carbohydrate biosynthesis; 3-deoxy-D-manno-octulosonate biosynthesis; 3-deoxy-D-manno-octulosonate from D-ribulose 5-phosphate: step 2/3.</text>
</comment>
<comment type="pathway">
    <text evidence="1">Bacterial outer membrane biogenesis; lipopolysaccharide biosynthesis.</text>
</comment>
<comment type="subcellular location">
    <subcellularLocation>
        <location evidence="1">Cytoplasm</location>
    </subcellularLocation>
</comment>
<comment type="similarity">
    <text evidence="1">Belongs to the KdsA family.</text>
</comment>